<sequence length="151" mass="16999">MTTNTHTLQIEEILELLPHRFPFLLVDRVLDFEEGRFLRAVKNVSVNEPFFQGHFPGKPILPGVLILEAMAQATGILAFKSVGKLEPGELYYFAGIDEARFKRPVVPGDQMIMEVTFEKTRRGLTRFKGVALVDGKVVCEATMMCARSREA</sequence>
<accession>B5FJ27</accession>
<keyword id="KW-0963">Cytoplasm</keyword>
<keyword id="KW-0441">Lipid A biosynthesis</keyword>
<keyword id="KW-0444">Lipid biosynthesis</keyword>
<keyword id="KW-0443">Lipid metabolism</keyword>
<keyword id="KW-0456">Lyase</keyword>
<feature type="chain" id="PRO_1000123659" description="3-hydroxyacyl-[acyl-carrier-protein] dehydratase FabZ">
    <location>
        <begin position="1"/>
        <end position="151"/>
    </location>
</feature>
<feature type="active site" evidence="1">
    <location>
        <position position="54"/>
    </location>
</feature>
<name>FABZ_SALDC</name>
<protein>
    <recommendedName>
        <fullName evidence="1">3-hydroxyacyl-[acyl-carrier-protein] dehydratase FabZ</fullName>
        <ecNumber evidence="1">4.2.1.59</ecNumber>
    </recommendedName>
    <alternativeName>
        <fullName evidence="1">(3R)-hydroxymyristoyl-[acyl-carrier-protein] dehydratase</fullName>
        <shortName evidence="1">(3R)-hydroxymyristoyl-ACP dehydrase</shortName>
    </alternativeName>
    <alternativeName>
        <fullName evidence="1">Beta-hydroxyacyl-ACP dehydratase</fullName>
    </alternativeName>
</protein>
<evidence type="ECO:0000255" key="1">
    <source>
        <dbReference type="HAMAP-Rule" id="MF_00406"/>
    </source>
</evidence>
<dbReference type="EC" id="4.2.1.59" evidence="1"/>
<dbReference type="EMBL" id="CP001144">
    <property type="protein sequence ID" value="ACH77682.1"/>
    <property type="molecule type" value="Genomic_DNA"/>
</dbReference>
<dbReference type="RefSeq" id="WP_000210741.1">
    <property type="nucleotide sequence ID" value="NC_011205.1"/>
</dbReference>
<dbReference type="SMR" id="B5FJ27"/>
<dbReference type="GeneID" id="66754751"/>
<dbReference type="KEGG" id="sed:SeD_A0249"/>
<dbReference type="HOGENOM" id="CLU_078912_1_0_6"/>
<dbReference type="Proteomes" id="UP000008322">
    <property type="component" value="Chromosome"/>
</dbReference>
<dbReference type="GO" id="GO:0005737">
    <property type="term" value="C:cytoplasm"/>
    <property type="evidence" value="ECO:0007669"/>
    <property type="project" value="UniProtKB-SubCell"/>
</dbReference>
<dbReference type="GO" id="GO:0016020">
    <property type="term" value="C:membrane"/>
    <property type="evidence" value="ECO:0007669"/>
    <property type="project" value="GOC"/>
</dbReference>
<dbReference type="GO" id="GO:0019171">
    <property type="term" value="F:(3R)-hydroxyacyl-[acyl-carrier-protein] dehydratase activity"/>
    <property type="evidence" value="ECO:0007669"/>
    <property type="project" value="UniProtKB-EC"/>
</dbReference>
<dbReference type="GO" id="GO:0006633">
    <property type="term" value="P:fatty acid biosynthetic process"/>
    <property type="evidence" value="ECO:0007669"/>
    <property type="project" value="UniProtKB-UniRule"/>
</dbReference>
<dbReference type="GO" id="GO:0009245">
    <property type="term" value="P:lipid A biosynthetic process"/>
    <property type="evidence" value="ECO:0007669"/>
    <property type="project" value="UniProtKB-UniRule"/>
</dbReference>
<dbReference type="CDD" id="cd01288">
    <property type="entry name" value="FabZ"/>
    <property type="match status" value="1"/>
</dbReference>
<dbReference type="FunFam" id="3.10.129.10:FF:000001">
    <property type="entry name" value="3-hydroxyacyl-[acyl-carrier-protein] dehydratase FabZ"/>
    <property type="match status" value="1"/>
</dbReference>
<dbReference type="Gene3D" id="3.10.129.10">
    <property type="entry name" value="Hotdog Thioesterase"/>
    <property type="match status" value="1"/>
</dbReference>
<dbReference type="HAMAP" id="MF_00406">
    <property type="entry name" value="FabZ"/>
    <property type="match status" value="1"/>
</dbReference>
<dbReference type="InterPro" id="IPR013114">
    <property type="entry name" value="FabA_FabZ"/>
</dbReference>
<dbReference type="InterPro" id="IPR010084">
    <property type="entry name" value="FabZ"/>
</dbReference>
<dbReference type="InterPro" id="IPR029069">
    <property type="entry name" value="HotDog_dom_sf"/>
</dbReference>
<dbReference type="NCBIfam" id="TIGR01750">
    <property type="entry name" value="fabZ"/>
    <property type="match status" value="1"/>
</dbReference>
<dbReference type="NCBIfam" id="NF000582">
    <property type="entry name" value="PRK00006.1"/>
    <property type="match status" value="1"/>
</dbReference>
<dbReference type="PANTHER" id="PTHR30272">
    <property type="entry name" value="3-HYDROXYACYL-[ACYL-CARRIER-PROTEIN] DEHYDRATASE"/>
    <property type="match status" value="1"/>
</dbReference>
<dbReference type="PANTHER" id="PTHR30272:SF1">
    <property type="entry name" value="3-HYDROXYACYL-[ACYL-CARRIER-PROTEIN] DEHYDRATASE"/>
    <property type="match status" value="1"/>
</dbReference>
<dbReference type="Pfam" id="PF07977">
    <property type="entry name" value="FabA"/>
    <property type="match status" value="1"/>
</dbReference>
<dbReference type="SUPFAM" id="SSF54637">
    <property type="entry name" value="Thioesterase/thiol ester dehydrase-isomerase"/>
    <property type="match status" value="1"/>
</dbReference>
<gene>
    <name evidence="1" type="primary">fabZ</name>
    <name type="ordered locus">SeD_A0249</name>
</gene>
<organism>
    <name type="scientific">Salmonella dublin (strain CT_02021853)</name>
    <dbReference type="NCBI Taxonomy" id="439851"/>
    <lineage>
        <taxon>Bacteria</taxon>
        <taxon>Pseudomonadati</taxon>
        <taxon>Pseudomonadota</taxon>
        <taxon>Gammaproteobacteria</taxon>
        <taxon>Enterobacterales</taxon>
        <taxon>Enterobacteriaceae</taxon>
        <taxon>Salmonella</taxon>
    </lineage>
</organism>
<proteinExistence type="inferred from homology"/>
<comment type="function">
    <text evidence="1">Involved in unsaturated fatty acids biosynthesis. Catalyzes the dehydration of short chain beta-hydroxyacyl-ACPs and long chain saturated and unsaturated beta-hydroxyacyl-ACPs.</text>
</comment>
<comment type="catalytic activity">
    <reaction evidence="1">
        <text>a (3R)-hydroxyacyl-[ACP] = a (2E)-enoyl-[ACP] + H2O</text>
        <dbReference type="Rhea" id="RHEA:13097"/>
        <dbReference type="Rhea" id="RHEA-COMP:9925"/>
        <dbReference type="Rhea" id="RHEA-COMP:9945"/>
        <dbReference type="ChEBI" id="CHEBI:15377"/>
        <dbReference type="ChEBI" id="CHEBI:78784"/>
        <dbReference type="ChEBI" id="CHEBI:78827"/>
        <dbReference type="EC" id="4.2.1.59"/>
    </reaction>
</comment>
<comment type="subcellular location">
    <subcellularLocation>
        <location evidence="1">Cytoplasm</location>
    </subcellularLocation>
</comment>
<comment type="similarity">
    <text evidence="1">Belongs to the thioester dehydratase family. FabZ subfamily.</text>
</comment>
<reference key="1">
    <citation type="journal article" date="2011" name="J. Bacteriol.">
        <title>Comparative genomics of 28 Salmonella enterica isolates: evidence for CRISPR-mediated adaptive sublineage evolution.</title>
        <authorList>
            <person name="Fricke W.F."/>
            <person name="Mammel M.K."/>
            <person name="McDermott P.F."/>
            <person name="Tartera C."/>
            <person name="White D.G."/>
            <person name="Leclerc J.E."/>
            <person name="Ravel J."/>
            <person name="Cebula T.A."/>
        </authorList>
    </citation>
    <scope>NUCLEOTIDE SEQUENCE [LARGE SCALE GENOMIC DNA]</scope>
    <source>
        <strain>CT_02021853</strain>
    </source>
</reference>